<feature type="chain" id="PRO_1000141986" description="Large ribosomal subunit protein uL24">
    <location>
        <begin position="1"/>
        <end position="102"/>
    </location>
</feature>
<comment type="function">
    <text evidence="1">One of two assembly initiator proteins, it binds directly to the 5'-end of the 23S rRNA, where it nucleates assembly of the 50S subunit.</text>
</comment>
<comment type="function">
    <text evidence="1">One of the proteins that surrounds the polypeptide exit tunnel on the outside of the subunit.</text>
</comment>
<comment type="subunit">
    <text evidence="1">Part of the 50S ribosomal subunit.</text>
</comment>
<comment type="similarity">
    <text evidence="1">Belongs to the universal ribosomal protein uL24 family.</text>
</comment>
<accession>B3R7R2</accession>
<reference key="1">
    <citation type="journal article" date="2008" name="Genome Res.">
        <title>Genome sequence of the beta-rhizobium Cupriavidus taiwanensis and comparative genomics of rhizobia.</title>
        <authorList>
            <person name="Amadou C."/>
            <person name="Pascal G."/>
            <person name="Mangenot S."/>
            <person name="Glew M."/>
            <person name="Bontemps C."/>
            <person name="Capela D."/>
            <person name="Carrere S."/>
            <person name="Cruveiller S."/>
            <person name="Dossat C."/>
            <person name="Lajus A."/>
            <person name="Marchetti M."/>
            <person name="Poinsot V."/>
            <person name="Rouy Z."/>
            <person name="Servin B."/>
            <person name="Saad M."/>
            <person name="Schenowitz C."/>
            <person name="Barbe V."/>
            <person name="Batut J."/>
            <person name="Medigue C."/>
            <person name="Masson-Boivin C."/>
        </authorList>
    </citation>
    <scope>NUCLEOTIDE SEQUENCE [LARGE SCALE GENOMIC DNA]</scope>
    <source>
        <strain>DSM 17343 / BCRC 17206 / CCUG 44338 / CIP 107171 / LMG 19424 / R1</strain>
    </source>
</reference>
<proteinExistence type="inferred from homology"/>
<organism>
    <name type="scientific">Cupriavidus taiwanensis (strain DSM 17343 / BCRC 17206 / CCUG 44338 / CIP 107171 / LMG 19424 / R1)</name>
    <name type="common">Ralstonia taiwanensis (strain LMG 19424)</name>
    <dbReference type="NCBI Taxonomy" id="977880"/>
    <lineage>
        <taxon>Bacteria</taxon>
        <taxon>Pseudomonadati</taxon>
        <taxon>Pseudomonadota</taxon>
        <taxon>Betaproteobacteria</taxon>
        <taxon>Burkholderiales</taxon>
        <taxon>Burkholderiaceae</taxon>
        <taxon>Cupriavidus</taxon>
    </lineage>
</organism>
<gene>
    <name evidence="1" type="primary">rplX</name>
    <name type="ordered locus">RALTA_A2932</name>
</gene>
<evidence type="ECO:0000255" key="1">
    <source>
        <dbReference type="HAMAP-Rule" id="MF_01326"/>
    </source>
</evidence>
<evidence type="ECO:0000305" key="2"/>
<sequence length="102" mass="10645">MNKIRKGDEVIVLTGKDKGKRGTVQAVLGDKVAVQGVNIAKKHARPNPMLGTTGGVVDKVMPLHISNVALVDANGKPSRVGIKVEDGKRVRVLKTTGAVVAA</sequence>
<keyword id="KW-0687">Ribonucleoprotein</keyword>
<keyword id="KW-0689">Ribosomal protein</keyword>
<keyword id="KW-0694">RNA-binding</keyword>
<keyword id="KW-0699">rRNA-binding</keyword>
<dbReference type="EMBL" id="CU633749">
    <property type="protein sequence ID" value="CAQ70857.1"/>
    <property type="molecule type" value="Genomic_DNA"/>
</dbReference>
<dbReference type="RefSeq" id="WP_010812387.1">
    <property type="nucleotide sequence ID" value="NC_010528.1"/>
</dbReference>
<dbReference type="SMR" id="B3R7R2"/>
<dbReference type="GeneID" id="34310489"/>
<dbReference type="KEGG" id="cti:RALTA_A2932"/>
<dbReference type="eggNOG" id="COG0198">
    <property type="taxonomic scope" value="Bacteria"/>
</dbReference>
<dbReference type="HOGENOM" id="CLU_093315_2_2_4"/>
<dbReference type="BioCyc" id="CTAI977880:RALTA_RS14300-MONOMER"/>
<dbReference type="Proteomes" id="UP000001692">
    <property type="component" value="Chromosome 1"/>
</dbReference>
<dbReference type="GO" id="GO:1990904">
    <property type="term" value="C:ribonucleoprotein complex"/>
    <property type="evidence" value="ECO:0007669"/>
    <property type="project" value="UniProtKB-KW"/>
</dbReference>
<dbReference type="GO" id="GO:0005840">
    <property type="term" value="C:ribosome"/>
    <property type="evidence" value="ECO:0007669"/>
    <property type="project" value="UniProtKB-KW"/>
</dbReference>
<dbReference type="GO" id="GO:0019843">
    <property type="term" value="F:rRNA binding"/>
    <property type="evidence" value="ECO:0007669"/>
    <property type="project" value="UniProtKB-UniRule"/>
</dbReference>
<dbReference type="GO" id="GO:0003735">
    <property type="term" value="F:structural constituent of ribosome"/>
    <property type="evidence" value="ECO:0007669"/>
    <property type="project" value="InterPro"/>
</dbReference>
<dbReference type="GO" id="GO:0006412">
    <property type="term" value="P:translation"/>
    <property type="evidence" value="ECO:0007669"/>
    <property type="project" value="UniProtKB-UniRule"/>
</dbReference>
<dbReference type="CDD" id="cd06089">
    <property type="entry name" value="KOW_RPL26"/>
    <property type="match status" value="1"/>
</dbReference>
<dbReference type="Gene3D" id="2.30.30.30">
    <property type="match status" value="1"/>
</dbReference>
<dbReference type="HAMAP" id="MF_01326_B">
    <property type="entry name" value="Ribosomal_uL24_B"/>
    <property type="match status" value="1"/>
</dbReference>
<dbReference type="InterPro" id="IPR005824">
    <property type="entry name" value="KOW"/>
</dbReference>
<dbReference type="InterPro" id="IPR014722">
    <property type="entry name" value="Rib_uL2_dom2"/>
</dbReference>
<dbReference type="InterPro" id="IPR003256">
    <property type="entry name" value="Ribosomal_uL24"/>
</dbReference>
<dbReference type="InterPro" id="IPR005825">
    <property type="entry name" value="Ribosomal_uL24_CS"/>
</dbReference>
<dbReference type="InterPro" id="IPR041988">
    <property type="entry name" value="Ribosomal_uL24_KOW"/>
</dbReference>
<dbReference type="InterPro" id="IPR008991">
    <property type="entry name" value="Translation_prot_SH3-like_sf"/>
</dbReference>
<dbReference type="NCBIfam" id="TIGR01079">
    <property type="entry name" value="rplX_bact"/>
    <property type="match status" value="1"/>
</dbReference>
<dbReference type="PANTHER" id="PTHR12903">
    <property type="entry name" value="MITOCHONDRIAL RIBOSOMAL PROTEIN L24"/>
    <property type="match status" value="1"/>
</dbReference>
<dbReference type="Pfam" id="PF00467">
    <property type="entry name" value="KOW"/>
    <property type="match status" value="1"/>
</dbReference>
<dbReference type="Pfam" id="PF17136">
    <property type="entry name" value="ribosomal_L24"/>
    <property type="match status" value="1"/>
</dbReference>
<dbReference type="SMART" id="SM00739">
    <property type="entry name" value="KOW"/>
    <property type="match status" value="1"/>
</dbReference>
<dbReference type="SUPFAM" id="SSF50104">
    <property type="entry name" value="Translation proteins SH3-like domain"/>
    <property type="match status" value="1"/>
</dbReference>
<dbReference type="PROSITE" id="PS01108">
    <property type="entry name" value="RIBOSOMAL_L24"/>
    <property type="match status" value="1"/>
</dbReference>
<name>RL24_CUPTR</name>
<protein>
    <recommendedName>
        <fullName evidence="1">Large ribosomal subunit protein uL24</fullName>
    </recommendedName>
    <alternativeName>
        <fullName evidence="2">50S ribosomal protein L24</fullName>
    </alternativeName>
</protein>